<comment type="function">
    <text>Proteoglycan that seems to be implicated in diverse developmental roles such as differentiation, cell-cell recognition, embryogenesis and programmed cell death.</text>
</comment>
<comment type="subcellular location">
    <subcellularLocation>
        <location evidence="4">Cell membrane</location>
        <topology evidence="4">Lipid-anchor</topology>
        <topology evidence="4">GPI-anchor</topology>
    </subcellularLocation>
</comment>
<comment type="PTM">
    <text evidence="1">O-glycosylated on the hydroxyproline residues.</text>
</comment>
<comment type="similarity">
    <text evidence="4">Belongs to the classical AGP family.</text>
</comment>
<feature type="signal peptide" evidence="2">
    <location>
        <begin position="1"/>
        <end position="21"/>
    </location>
</feature>
<feature type="chain" id="PRO_0000269009" description="Classical arabinogalactan protein 27">
    <location>
        <begin position="22"/>
        <end position="98"/>
    </location>
</feature>
<feature type="propeptide" id="PRO_0000269010" description="Removed in mature form" evidence="2">
    <location>
        <begin position="99"/>
        <end position="125"/>
    </location>
</feature>
<feature type="region of interest" description="Disordered" evidence="3">
    <location>
        <begin position="20"/>
        <end position="95"/>
    </location>
</feature>
<feature type="compositionally biased region" description="Low complexity" evidence="3">
    <location>
        <begin position="20"/>
        <end position="36"/>
    </location>
</feature>
<feature type="compositionally biased region" description="Polar residues" evidence="3">
    <location>
        <begin position="53"/>
        <end position="66"/>
    </location>
</feature>
<feature type="compositionally biased region" description="Low complexity" evidence="3">
    <location>
        <begin position="77"/>
        <end position="95"/>
    </location>
</feature>
<feature type="lipid moiety-binding region" description="GPI-anchor amidated serine" evidence="2">
    <location>
        <position position="98"/>
    </location>
</feature>
<name>AGP27_ARATH</name>
<evidence type="ECO:0000250" key="1"/>
<evidence type="ECO:0000255" key="2"/>
<evidence type="ECO:0000256" key="3">
    <source>
        <dbReference type="SAM" id="MobiDB-lite"/>
    </source>
</evidence>
<evidence type="ECO:0000305" key="4"/>
<dbReference type="EMBL" id="AC011623">
    <property type="protein sequence ID" value="AAF08578.1"/>
    <property type="molecule type" value="Genomic_DNA"/>
</dbReference>
<dbReference type="EMBL" id="CP002686">
    <property type="protein sequence ID" value="AEE74382.1"/>
    <property type="molecule type" value="Genomic_DNA"/>
</dbReference>
<dbReference type="EMBL" id="DQ446641">
    <property type="protein sequence ID" value="ABE65922.1"/>
    <property type="molecule type" value="mRNA"/>
</dbReference>
<dbReference type="EMBL" id="AY086654">
    <property type="protein sequence ID" value="AAM63711.1"/>
    <property type="molecule type" value="mRNA"/>
</dbReference>
<dbReference type="EMBL" id="BT026089">
    <property type="protein sequence ID" value="ABG48445.1"/>
    <property type="molecule type" value="mRNA"/>
</dbReference>
<dbReference type="RefSeq" id="NP_566282.1">
    <property type="nucleotide sequence ID" value="NM_111511.2"/>
</dbReference>
<dbReference type="SMR" id="Q9SQT9"/>
<dbReference type="BioGRID" id="5145">
    <property type="interactions" value="31"/>
</dbReference>
<dbReference type="IntAct" id="Q9SQT9">
    <property type="interactions" value="23"/>
</dbReference>
<dbReference type="STRING" id="3702.Q9SQT9"/>
<dbReference type="PaxDb" id="3702-AT3G06360.1"/>
<dbReference type="EnsemblPlants" id="AT3G06360.1">
    <property type="protein sequence ID" value="AT3G06360.1"/>
    <property type="gene ID" value="AT3G06360"/>
</dbReference>
<dbReference type="GeneID" id="819810"/>
<dbReference type="Gramene" id="AT3G06360.1">
    <property type="protein sequence ID" value="AT3G06360.1"/>
    <property type="gene ID" value="AT3G06360"/>
</dbReference>
<dbReference type="KEGG" id="ath:AT3G06360"/>
<dbReference type="Araport" id="AT3G06360"/>
<dbReference type="TAIR" id="AT3G06360">
    <property type="gene designation" value="AGP27"/>
</dbReference>
<dbReference type="HOGENOM" id="CLU_2007023_0_0_1"/>
<dbReference type="InParanoid" id="Q9SQT9"/>
<dbReference type="OMA" id="FPFEDQI"/>
<dbReference type="PRO" id="PR:Q9SQT9"/>
<dbReference type="Proteomes" id="UP000006548">
    <property type="component" value="Chromosome 3"/>
</dbReference>
<dbReference type="ExpressionAtlas" id="Q9SQT9">
    <property type="expression patterns" value="baseline and differential"/>
</dbReference>
<dbReference type="GO" id="GO:0005886">
    <property type="term" value="C:plasma membrane"/>
    <property type="evidence" value="ECO:0007669"/>
    <property type="project" value="UniProtKB-SubCell"/>
</dbReference>
<dbReference type="GO" id="GO:0098552">
    <property type="term" value="C:side of membrane"/>
    <property type="evidence" value="ECO:0007669"/>
    <property type="project" value="UniProtKB-KW"/>
</dbReference>
<reference key="1">
    <citation type="journal article" date="2000" name="Nature">
        <title>Sequence and analysis of chromosome 3 of the plant Arabidopsis thaliana.</title>
        <authorList>
            <person name="Salanoubat M."/>
            <person name="Lemcke K."/>
            <person name="Rieger M."/>
            <person name="Ansorge W."/>
            <person name="Unseld M."/>
            <person name="Fartmann B."/>
            <person name="Valle G."/>
            <person name="Bloecker H."/>
            <person name="Perez-Alonso M."/>
            <person name="Obermaier B."/>
            <person name="Delseny M."/>
            <person name="Boutry M."/>
            <person name="Grivell L.A."/>
            <person name="Mache R."/>
            <person name="Puigdomenech P."/>
            <person name="De Simone V."/>
            <person name="Choisne N."/>
            <person name="Artiguenave F."/>
            <person name="Robert C."/>
            <person name="Brottier P."/>
            <person name="Wincker P."/>
            <person name="Cattolico L."/>
            <person name="Weissenbach J."/>
            <person name="Saurin W."/>
            <person name="Quetier F."/>
            <person name="Schaefer M."/>
            <person name="Mueller-Auer S."/>
            <person name="Gabel C."/>
            <person name="Fuchs M."/>
            <person name="Benes V."/>
            <person name="Wurmbach E."/>
            <person name="Drzonek H."/>
            <person name="Erfle H."/>
            <person name="Jordan N."/>
            <person name="Bangert S."/>
            <person name="Wiedelmann R."/>
            <person name="Kranz H."/>
            <person name="Voss H."/>
            <person name="Holland R."/>
            <person name="Brandt P."/>
            <person name="Nyakatura G."/>
            <person name="Vezzi A."/>
            <person name="D'Angelo M."/>
            <person name="Pallavicini A."/>
            <person name="Toppo S."/>
            <person name="Simionati B."/>
            <person name="Conrad A."/>
            <person name="Hornischer K."/>
            <person name="Kauer G."/>
            <person name="Loehnert T.-H."/>
            <person name="Nordsiek G."/>
            <person name="Reichelt J."/>
            <person name="Scharfe M."/>
            <person name="Schoen O."/>
            <person name="Bargues M."/>
            <person name="Terol J."/>
            <person name="Climent J."/>
            <person name="Navarro P."/>
            <person name="Collado C."/>
            <person name="Perez-Perez A."/>
            <person name="Ottenwaelder B."/>
            <person name="Duchemin D."/>
            <person name="Cooke R."/>
            <person name="Laudie M."/>
            <person name="Berger-Llauro C."/>
            <person name="Purnelle B."/>
            <person name="Masuy D."/>
            <person name="de Haan M."/>
            <person name="Maarse A.C."/>
            <person name="Alcaraz J.-P."/>
            <person name="Cottet A."/>
            <person name="Casacuberta E."/>
            <person name="Monfort A."/>
            <person name="Argiriou A."/>
            <person name="Flores M."/>
            <person name="Liguori R."/>
            <person name="Vitale D."/>
            <person name="Mannhaupt G."/>
            <person name="Haase D."/>
            <person name="Schoof H."/>
            <person name="Rudd S."/>
            <person name="Zaccaria P."/>
            <person name="Mewes H.-W."/>
            <person name="Mayer K.F.X."/>
            <person name="Kaul S."/>
            <person name="Town C.D."/>
            <person name="Koo H.L."/>
            <person name="Tallon L.J."/>
            <person name="Jenkins J."/>
            <person name="Rooney T."/>
            <person name="Rizzo M."/>
            <person name="Walts A."/>
            <person name="Utterback T."/>
            <person name="Fujii C.Y."/>
            <person name="Shea T.P."/>
            <person name="Creasy T.H."/>
            <person name="Haas B."/>
            <person name="Maiti R."/>
            <person name="Wu D."/>
            <person name="Peterson J."/>
            <person name="Van Aken S."/>
            <person name="Pai G."/>
            <person name="Militscher J."/>
            <person name="Sellers P."/>
            <person name="Gill J.E."/>
            <person name="Feldblyum T.V."/>
            <person name="Preuss D."/>
            <person name="Lin X."/>
            <person name="Nierman W.C."/>
            <person name="Salzberg S.L."/>
            <person name="White O."/>
            <person name="Venter J.C."/>
            <person name="Fraser C.M."/>
            <person name="Kaneko T."/>
            <person name="Nakamura Y."/>
            <person name="Sato S."/>
            <person name="Kato T."/>
            <person name="Asamizu E."/>
            <person name="Sasamoto S."/>
            <person name="Kimura T."/>
            <person name="Idesawa K."/>
            <person name="Kawashima K."/>
            <person name="Kishida Y."/>
            <person name="Kiyokawa C."/>
            <person name="Kohara M."/>
            <person name="Matsumoto M."/>
            <person name="Matsuno A."/>
            <person name="Muraki A."/>
            <person name="Nakayama S."/>
            <person name="Nakazaki N."/>
            <person name="Shinpo S."/>
            <person name="Takeuchi C."/>
            <person name="Wada T."/>
            <person name="Watanabe A."/>
            <person name="Yamada M."/>
            <person name="Yasuda M."/>
            <person name="Tabata S."/>
        </authorList>
    </citation>
    <scope>NUCLEOTIDE SEQUENCE [LARGE SCALE GENOMIC DNA]</scope>
    <source>
        <strain>cv. Columbia</strain>
    </source>
</reference>
<reference key="2">
    <citation type="journal article" date="2017" name="Plant J.">
        <title>Araport11: a complete reannotation of the Arabidopsis thaliana reference genome.</title>
        <authorList>
            <person name="Cheng C.Y."/>
            <person name="Krishnakumar V."/>
            <person name="Chan A.P."/>
            <person name="Thibaud-Nissen F."/>
            <person name="Schobel S."/>
            <person name="Town C.D."/>
        </authorList>
    </citation>
    <scope>GENOME REANNOTATION</scope>
    <source>
        <strain>cv. Columbia</strain>
    </source>
</reference>
<reference key="3">
    <citation type="journal article" date="2006" name="Plant Biotechnol. J.">
        <title>Simultaneous high-throughput recombinational cloning of open reading frames in closed and open configurations.</title>
        <authorList>
            <person name="Underwood B.A."/>
            <person name="Vanderhaeghen R."/>
            <person name="Whitford R."/>
            <person name="Town C.D."/>
            <person name="Hilson P."/>
        </authorList>
    </citation>
    <scope>NUCLEOTIDE SEQUENCE [LARGE SCALE MRNA]</scope>
    <source>
        <strain>cv. Columbia</strain>
    </source>
</reference>
<reference key="4">
    <citation type="submission" date="2002-03" db="EMBL/GenBank/DDBJ databases">
        <title>Full-length cDNA from Arabidopsis thaliana.</title>
        <authorList>
            <person name="Brover V.V."/>
            <person name="Troukhan M.E."/>
            <person name="Alexandrov N.A."/>
            <person name="Lu Y.-P."/>
            <person name="Flavell R.B."/>
            <person name="Feldmann K.A."/>
        </authorList>
    </citation>
    <scope>NUCLEOTIDE SEQUENCE [LARGE SCALE MRNA]</scope>
</reference>
<reference key="5">
    <citation type="submission" date="2006-07" db="EMBL/GenBank/DDBJ databases">
        <title>Arabidopsis ORF clones.</title>
        <authorList>
            <person name="Quinitio C."/>
            <person name="Chen H."/>
            <person name="Kim C.J."/>
            <person name="Shinn P."/>
            <person name="Ecker J.R."/>
        </authorList>
    </citation>
    <scope>NUCLEOTIDE SEQUENCE [LARGE SCALE MRNA]</scope>
    <source>
        <strain>cv. Columbia</strain>
    </source>
</reference>
<reference key="6">
    <citation type="journal article" date="2002" name="Plant Physiol.">
        <title>Using genomic resources to guide research directions. The arabinogalactan protein gene family as a test case.</title>
        <authorList>
            <person name="Schultz C.J."/>
            <person name="Rumsewicz M.P."/>
            <person name="Johnson K.L."/>
            <person name="Jones B.J."/>
            <person name="Gaspar Y.M."/>
            <person name="Bacic A."/>
        </authorList>
    </citation>
    <scope>GENE FAMILY</scope>
    <scope>NOMENCLATURE</scope>
</reference>
<sequence>MASSILLTLITFIFLSSLSLSSPTTNTIPSSQTISPSEEKISPEIAPLLPSPAVSSTQTIPSSSTLPEPENDDVSADPDPAFAPSASPPASSLASLSSQAPGVFIYFVFAAVYCFSLRLLAVSAI</sequence>
<gene>
    <name type="primary">AGP27</name>
    <name type="ordered locus">At3g06360</name>
    <name type="ORF">F24P17.17</name>
</gene>
<organism>
    <name type="scientific">Arabidopsis thaliana</name>
    <name type="common">Mouse-ear cress</name>
    <dbReference type="NCBI Taxonomy" id="3702"/>
    <lineage>
        <taxon>Eukaryota</taxon>
        <taxon>Viridiplantae</taxon>
        <taxon>Streptophyta</taxon>
        <taxon>Embryophyta</taxon>
        <taxon>Tracheophyta</taxon>
        <taxon>Spermatophyta</taxon>
        <taxon>Magnoliopsida</taxon>
        <taxon>eudicotyledons</taxon>
        <taxon>Gunneridae</taxon>
        <taxon>Pentapetalae</taxon>
        <taxon>rosids</taxon>
        <taxon>malvids</taxon>
        <taxon>Brassicales</taxon>
        <taxon>Brassicaceae</taxon>
        <taxon>Camelineae</taxon>
        <taxon>Arabidopsis</taxon>
    </lineage>
</organism>
<accession>Q9SQT9</accession>
<proteinExistence type="evidence at transcript level"/>
<keyword id="KW-1003">Cell membrane</keyword>
<keyword id="KW-0325">Glycoprotein</keyword>
<keyword id="KW-0336">GPI-anchor</keyword>
<keyword id="KW-0449">Lipoprotein</keyword>
<keyword id="KW-0472">Membrane</keyword>
<keyword id="KW-0654">Proteoglycan</keyword>
<keyword id="KW-1185">Reference proteome</keyword>
<keyword id="KW-0732">Signal</keyword>
<protein>
    <recommendedName>
        <fullName>Classical arabinogalactan protein 27</fullName>
    </recommendedName>
</protein>